<accession>A1W907</accession>
<protein>
    <recommendedName>
        <fullName evidence="1">3-hydroxyacyl-[acyl-carrier-protein] dehydratase FabZ</fullName>
        <ecNumber evidence="1">4.2.1.59</ecNumber>
    </recommendedName>
    <alternativeName>
        <fullName evidence="1">(3R)-hydroxymyristoyl-[acyl-carrier-protein] dehydratase</fullName>
        <shortName evidence="1">(3R)-hydroxymyristoyl-ACP dehydrase</shortName>
    </alternativeName>
    <alternativeName>
        <fullName evidence="1">Beta-hydroxyacyl-ACP dehydratase</fullName>
    </alternativeName>
</protein>
<reference key="1">
    <citation type="submission" date="2006-12" db="EMBL/GenBank/DDBJ databases">
        <title>Complete sequence of chromosome 1 of Acidovorax sp. JS42.</title>
        <authorList>
            <person name="Copeland A."/>
            <person name="Lucas S."/>
            <person name="Lapidus A."/>
            <person name="Barry K."/>
            <person name="Detter J.C."/>
            <person name="Glavina del Rio T."/>
            <person name="Dalin E."/>
            <person name="Tice H."/>
            <person name="Pitluck S."/>
            <person name="Chertkov O."/>
            <person name="Brettin T."/>
            <person name="Bruce D."/>
            <person name="Han C."/>
            <person name="Tapia R."/>
            <person name="Gilna P."/>
            <person name="Schmutz J."/>
            <person name="Larimer F."/>
            <person name="Land M."/>
            <person name="Hauser L."/>
            <person name="Kyrpides N."/>
            <person name="Kim E."/>
            <person name="Stahl D."/>
            <person name="Richardson P."/>
        </authorList>
    </citation>
    <scope>NUCLEOTIDE SEQUENCE [LARGE SCALE GENOMIC DNA]</scope>
    <source>
        <strain>JS42</strain>
    </source>
</reference>
<feature type="chain" id="PRO_0000340752" description="3-hydroxyacyl-[acyl-carrier-protein] dehydratase FabZ">
    <location>
        <begin position="1"/>
        <end position="145"/>
    </location>
</feature>
<feature type="active site" evidence="1">
    <location>
        <position position="47"/>
    </location>
</feature>
<gene>
    <name evidence="1" type="primary">fabZ</name>
    <name type="ordered locus">Ajs_2574</name>
</gene>
<comment type="function">
    <text evidence="1">Involved in unsaturated fatty acids biosynthesis. Catalyzes the dehydration of short chain beta-hydroxyacyl-ACPs and long chain saturated and unsaturated beta-hydroxyacyl-ACPs.</text>
</comment>
<comment type="catalytic activity">
    <reaction evidence="1">
        <text>a (3R)-hydroxyacyl-[ACP] = a (2E)-enoyl-[ACP] + H2O</text>
        <dbReference type="Rhea" id="RHEA:13097"/>
        <dbReference type="Rhea" id="RHEA-COMP:9925"/>
        <dbReference type="Rhea" id="RHEA-COMP:9945"/>
        <dbReference type="ChEBI" id="CHEBI:15377"/>
        <dbReference type="ChEBI" id="CHEBI:78784"/>
        <dbReference type="ChEBI" id="CHEBI:78827"/>
        <dbReference type="EC" id="4.2.1.59"/>
    </reaction>
</comment>
<comment type="subcellular location">
    <subcellularLocation>
        <location evidence="1">Cytoplasm</location>
    </subcellularLocation>
</comment>
<comment type="similarity">
    <text evidence="1">Belongs to the thioester dehydratase family. FabZ subfamily.</text>
</comment>
<comment type="sequence caution" evidence="2">
    <conflict type="erroneous initiation">
        <sequence resource="EMBL-CDS" id="ABM42732"/>
    </conflict>
</comment>
<keyword id="KW-0963">Cytoplasm</keyword>
<keyword id="KW-0441">Lipid A biosynthesis</keyword>
<keyword id="KW-0444">Lipid biosynthesis</keyword>
<keyword id="KW-0443">Lipid metabolism</keyword>
<keyword id="KW-0456">Lyase</keyword>
<proteinExistence type="inferred from homology"/>
<sequence length="145" mass="16142">MDIHQILKLLPHRYPFLLVDRVNELERGKRILAIKNVTINEPFFTGHFPARPVMPGVLILEALAQAAGLLSFDMMGEAPGDDKVFYFVGIDGARFKRPVEPGDQLILDVELDRIKGGIYKFKGVARVGDSVACEAEIMCTMRTVA</sequence>
<dbReference type="EC" id="4.2.1.59" evidence="1"/>
<dbReference type="EMBL" id="CP000539">
    <property type="protein sequence ID" value="ABM42732.1"/>
    <property type="status" value="ALT_INIT"/>
    <property type="molecule type" value="Genomic_DNA"/>
</dbReference>
<dbReference type="SMR" id="A1W907"/>
<dbReference type="STRING" id="232721.Ajs_2574"/>
<dbReference type="KEGG" id="ajs:Ajs_2574"/>
<dbReference type="eggNOG" id="COG0764">
    <property type="taxonomic scope" value="Bacteria"/>
</dbReference>
<dbReference type="HOGENOM" id="CLU_078912_1_0_4"/>
<dbReference type="Proteomes" id="UP000000645">
    <property type="component" value="Chromosome"/>
</dbReference>
<dbReference type="GO" id="GO:0005737">
    <property type="term" value="C:cytoplasm"/>
    <property type="evidence" value="ECO:0007669"/>
    <property type="project" value="UniProtKB-SubCell"/>
</dbReference>
<dbReference type="GO" id="GO:0016020">
    <property type="term" value="C:membrane"/>
    <property type="evidence" value="ECO:0007669"/>
    <property type="project" value="GOC"/>
</dbReference>
<dbReference type="GO" id="GO:0019171">
    <property type="term" value="F:(3R)-hydroxyacyl-[acyl-carrier-protein] dehydratase activity"/>
    <property type="evidence" value="ECO:0007669"/>
    <property type="project" value="UniProtKB-EC"/>
</dbReference>
<dbReference type="GO" id="GO:0006633">
    <property type="term" value="P:fatty acid biosynthetic process"/>
    <property type="evidence" value="ECO:0007669"/>
    <property type="project" value="UniProtKB-UniRule"/>
</dbReference>
<dbReference type="GO" id="GO:0009245">
    <property type="term" value="P:lipid A biosynthetic process"/>
    <property type="evidence" value="ECO:0007669"/>
    <property type="project" value="UniProtKB-UniRule"/>
</dbReference>
<dbReference type="CDD" id="cd01288">
    <property type="entry name" value="FabZ"/>
    <property type="match status" value="1"/>
</dbReference>
<dbReference type="FunFam" id="3.10.129.10:FF:000001">
    <property type="entry name" value="3-hydroxyacyl-[acyl-carrier-protein] dehydratase FabZ"/>
    <property type="match status" value="1"/>
</dbReference>
<dbReference type="Gene3D" id="3.10.129.10">
    <property type="entry name" value="Hotdog Thioesterase"/>
    <property type="match status" value="1"/>
</dbReference>
<dbReference type="HAMAP" id="MF_00406">
    <property type="entry name" value="FabZ"/>
    <property type="match status" value="1"/>
</dbReference>
<dbReference type="InterPro" id="IPR013114">
    <property type="entry name" value="FabA_FabZ"/>
</dbReference>
<dbReference type="InterPro" id="IPR010084">
    <property type="entry name" value="FabZ"/>
</dbReference>
<dbReference type="InterPro" id="IPR029069">
    <property type="entry name" value="HotDog_dom_sf"/>
</dbReference>
<dbReference type="NCBIfam" id="TIGR01750">
    <property type="entry name" value="fabZ"/>
    <property type="match status" value="1"/>
</dbReference>
<dbReference type="NCBIfam" id="NF000582">
    <property type="entry name" value="PRK00006.1"/>
    <property type="match status" value="1"/>
</dbReference>
<dbReference type="PANTHER" id="PTHR30272">
    <property type="entry name" value="3-HYDROXYACYL-[ACYL-CARRIER-PROTEIN] DEHYDRATASE"/>
    <property type="match status" value="1"/>
</dbReference>
<dbReference type="PANTHER" id="PTHR30272:SF1">
    <property type="entry name" value="3-HYDROXYACYL-[ACYL-CARRIER-PROTEIN] DEHYDRATASE"/>
    <property type="match status" value="1"/>
</dbReference>
<dbReference type="Pfam" id="PF07977">
    <property type="entry name" value="FabA"/>
    <property type="match status" value="1"/>
</dbReference>
<dbReference type="SUPFAM" id="SSF54637">
    <property type="entry name" value="Thioesterase/thiol ester dehydrase-isomerase"/>
    <property type="match status" value="1"/>
</dbReference>
<organism>
    <name type="scientific">Acidovorax sp. (strain JS42)</name>
    <dbReference type="NCBI Taxonomy" id="232721"/>
    <lineage>
        <taxon>Bacteria</taxon>
        <taxon>Pseudomonadati</taxon>
        <taxon>Pseudomonadota</taxon>
        <taxon>Betaproteobacteria</taxon>
        <taxon>Burkholderiales</taxon>
        <taxon>Comamonadaceae</taxon>
        <taxon>Acidovorax</taxon>
    </lineage>
</organism>
<evidence type="ECO:0000255" key="1">
    <source>
        <dbReference type="HAMAP-Rule" id="MF_00406"/>
    </source>
</evidence>
<evidence type="ECO:0000305" key="2"/>
<name>FABZ_ACISJ</name>